<accession>Q13XE2</accession>
<evidence type="ECO:0000255" key="1">
    <source>
        <dbReference type="HAMAP-Rule" id="MF_00344"/>
    </source>
</evidence>
<reference key="1">
    <citation type="journal article" date="2006" name="Proc. Natl. Acad. Sci. U.S.A.">
        <title>Burkholderia xenovorans LB400 harbors a multi-replicon, 9.73-Mbp genome shaped for versatility.</title>
        <authorList>
            <person name="Chain P.S.G."/>
            <person name="Denef V.J."/>
            <person name="Konstantinidis K.T."/>
            <person name="Vergez L.M."/>
            <person name="Agullo L."/>
            <person name="Reyes V.L."/>
            <person name="Hauser L."/>
            <person name="Cordova M."/>
            <person name="Gomez L."/>
            <person name="Gonzalez M."/>
            <person name="Land M."/>
            <person name="Lao V."/>
            <person name="Larimer F."/>
            <person name="LiPuma J.J."/>
            <person name="Mahenthiralingam E."/>
            <person name="Malfatti S.A."/>
            <person name="Marx C.J."/>
            <person name="Parnell J.J."/>
            <person name="Ramette A."/>
            <person name="Richardson P."/>
            <person name="Seeger M."/>
            <person name="Smith D."/>
            <person name="Spilker T."/>
            <person name="Sul W.J."/>
            <person name="Tsoi T.V."/>
            <person name="Ulrich L.E."/>
            <person name="Zhulin I.B."/>
            <person name="Tiedje J.M."/>
        </authorList>
    </citation>
    <scope>NUCLEOTIDE SEQUENCE [LARGE SCALE GENOMIC DNA]</scope>
    <source>
        <strain>LB400</strain>
    </source>
</reference>
<dbReference type="EC" id="6.3.5.2" evidence="1"/>
<dbReference type="EMBL" id="CP000270">
    <property type="protein sequence ID" value="ABE31247.1"/>
    <property type="molecule type" value="Genomic_DNA"/>
</dbReference>
<dbReference type="RefSeq" id="WP_011488843.1">
    <property type="nucleotide sequence ID" value="NC_007951.1"/>
</dbReference>
<dbReference type="SMR" id="Q13XE2"/>
<dbReference type="STRING" id="266265.Bxe_A1708"/>
<dbReference type="KEGG" id="bxb:DR64_3873"/>
<dbReference type="KEGG" id="bxe:Bxe_A1708"/>
<dbReference type="PATRIC" id="fig|266265.5.peg.2836"/>
<dbReference type="eggNOG" id="COG0518">
    <property type="taxonomic scope" value="Bacteria"/>
</dbReference>
<dbReference type="eggNOG" id="COG0519">
    <property type="taxonomic scope" value="Bacteria"/>
</dbReference>
<dbReference type="OrthoDB" id="9802219at2"/>
<dbReference type="UniPathway" id="UPA00189">
    <property type="reaction ID" value="UER00296"/>
</dbReference>
<dbReference type="Proteomes" id="UP000001817">
    <property type="component" value="Chromosome 1"/>
</dbReference>
<dbReference type="GO" id="GO:0005829">
    <property type="term" value="C:cytosol"/>
    <property type="evidence" value="ECO:0007669"/>
    <property type="project" value="TreeGrafter"/>
</dbReference>
<dbReference type="GO" id="GO:0005524">
    <property type="term" value="F:ATP binding"/>
    <property type="evidence" value="ECO:0007669"/>
    <property type="project" value="UniProtKB-UniRule"/>
</dbReference>
<dbReference type="GO" id="GO:0003921">
    <property type="term" value="F:GMP synthase activity"/>
    <property type="evidence" value="ECO:0007669"/>
    <property type="project" value="InterPro"/>
</dbReference>
<dbReference type="CDD" id="cd01742">
    <property type="entry name" value="GATase1_GMP_Synthase"/>
    <property type="match status" value="1"/>
</dbReference>
<dbReference type="CDD" id="cd01997">
    <property type="entry name" value="GMP_synthase_C"/>
    <property type="match status" value="1"/>
</dbReference>
<dbReference type="FunFam" id="3.30.300.10:FF:000002">
    <property type="entry name" value="GMP synthase [glutamine-hydrolyzing]"/>
    <property type="match status" value="1"/>
</dbReference>
<dbReference type="FunFam" id="3.40.50.620:FF:000001">
    <property type="entry name" value="GMP synthase [glutamine-hydrolyzing]"/>
    <property type="match status" value="1"/>
</dbReference>
<dbReference type="FunFam" id="3.40.50.880:FF:000001">
    <property type="entry name" value="GMP synthase [glutamine-hydrolyzing]"/>
    <property type="match status" value="1"/>
</dbReference>
<dbReference type="Gene3D" id="3.30.300.10">
    <property type="match status" value="1"/>
</dbReference>
<dbReference type="Gene3D" id="3.40.50.880">
    <property type="match status" value="1"/>
</dbReference>
<dbReference type="Gene3D" id="3.40.50.620">
    <property type="entry name" value="HUPs"/>
    <property type="match status" value="1"/>
</dbReference>
<dbReference type="HAMAP" id="MF_00344">
    <property type="entry name" value="GMP_synthase"/>
    <property type="match status" value="1"/>
</dbReference>
<dbReference type="InterPro" id="IPR029062">
    <property type="entry name" value="Class_I_gatase-like"/>
</dbReference>
<dbReference type="InterPro" id="IPR017926">
    <property type="entry name" value="GATASE"/>
</dbReference>
<dbReference type="InterPro" id="IPR001674">
    <property type="entry name" value="GMP_synth_C"/>
</dbReference>
<dbReference type="InterPro" id="IPR004739">
    <property type="entry name" value="GMP_synth_GATase"/>
</dbReference>
<dbReference type="InterPro" id="IPR022955">
    <property type="entry name" value="GMP_synthase"/>
</dbReference>
<dbReference type="InterPro" id="IPR025777">
    <property type="entry name" value="GMPS_ATP_PPase_dom"/>
</dbReference>
<dbReference type="InterPro" id="IPR022310">
    <property type="entry name" value="NAD/GMP_synthase"/>
</dbReference>
<dbReference type="InterPro" id="IPR014729">
    <property type="entry name" value="Rossmann-like_a/b/a_fold"/>
</dbReference>
<dbReference type="NCBIfam" id="TIGR00884">
    <property type="entry name" value="guaA_Cterm"/>
    <property type="match status" value="1"/>
</dbReference>
<dbReference type="NCBIfam" id="TIGR00888">
    <property type="entry name" value="guaA_Nterm"/>
    <property type="match status" value="1"/>
</dbReference>
<dbReference type="NCBIfam" id="NF000848">
    <property type="entry name" value="PRK00074.1"/>
    <property type="match status" value="1"/>
</dbReference>
<dbReference type="PANTHER" id="PTHR11922:SF2">
    <property type="entry name" value="GMP SYNTHASE [GLUTAMINE-HYDROLYZING]"/>
    <property type="match status" value="1"/>
</dbReference>
<dbReference type="PANTHER" id="PTHR11922">
    <property type="entry name" value="GMP SYNTHASE-RELATED"/>
    <property type="match status" value="1"/>
</dbReference>
<dbReference type="Pfam" id="PF00117">
    <property type="entry name" value="GATase"/>
    <property type="match status" value="1"/>
</dbReference>
<dbReference type="Pfam" id="PF00958">
    <property type="entry name" value="GMP_synt_C"/>
    <property type="match status" value="1"/>
</dbReference>
<dbReference type="Pfam" id="PF02540">
    <property type="entry name" value="NAD_synthase"/>
    <property type="match status" value="1"/>
</dbReference>
<dbReference type="PRINTS" id="PR00097">
    <property type="entry name" value="ANTSNTHASEII"/>
</dbReference>
<dbReference type="PRINTS" id="PR00099">
    <property type="entry name" value="CPSGATASE"/>
</dbReference>
<dbReference type="PRINTS" id="PR00096">
    <property type="entry name" value="GATASE"/>
</dbReference>
<dbReference type="SUPFAM" id="SSF52402">
    <property type="entry name" value="Adenine nucleotide alpha hydrolases-like"/>
    <property type="match status" value="1"/>
</dbReference>
<dbReference type="SUPFAM" id="SSF52317">
    <property type="entry name" value="Class I glutamine amidotransferase-like"/>
    <property type="match status" value="1"/>
</dbReference>
<dbReference type="SUPFAM" id="SSF54810">
    <property type="entry name" value="GMP synthetase C-terminal dimerisation domain"/>
    <property type="match status" value="1"/>
</dbReference>
<dbReference type="PROSITE" id="PS51273">
    <property type="entry name" value="GATASE_TYPE_1"/>
    <property type="match status" value="1"/>
</dbReference>
<dbReference type="PROSITE" id="PS51553">
    <property type="entry name" value="GMPS_ATP_PPASE"/>
    <property type="match status" value="1"/>
</dbReference>
<proteinExistence type="inferred from homology"/>
<organism>
    <name type="scientific">Paraburkholderia xenovorans (strain LB400)</name>
    <dbReference type="NCBI Taxonomy" id="266265"/>
    <lineage>
        <taxon>Bacteria</taxon>
        <taxon>Pseudomonadati</taxon>
        <taxon>Pseudomonadota</taxon>
        <taxon>Betaproteobacteria</taxon>
        <taxon>Burkholderiales</taxon>
        <taxon>Burkholderiaceae</taxon>
        <taxon>Paraburkholderia</taxon>
    </lineage>
</organism>
<comment type="function">
    <text evidence="1">Catalyzes the synthesis of GMP from XMP.</text>
</comment>
<comment type="catalytic activity">
    <reaction evidence="1">
        <text>XMP + L-glutamine + ATP + H2O = GMP + L-glutamate + AMP + diphosphate + 2 H(+)</text>
        <dbReference type="Rhea" id="RHEA:11680"/>
        <dbReference type="ChEBI" id="CHEBI:15377"/>
        <dbReference type="ChEBI" id="CHEBI:15378"/>
        <dbReference type="ChEBI" id="CHEBI:29985"/>
        <dbReference type="ChEBI" id="CHEBI:30616"/>
        <dbReference type="ChEBI" id="CHEBI:33019"/>
        <dbReference type="ChEBI" id="CHEBI:57464"/>
        <dbReference type="ChEBI" id="CHEBI:58115"/>
        <dbReference type="ChEBI" id="CHEBI:58359"/>
        <dbReference type="ChEBI" id="CHEBI:456215"/>
        <dbReference type="EC" id="6.3.5.2"/>
    </reaction>
</comment>
<comment type="pathway">
    <text evidence="1">Purine metabolism; GMP biosynthesis; GMP from XMP (L-Gln route): step 1/1.</text>
</comment>
<comment type="subunit">
    <text evidence="1">Homodimer.</text>
</comment>
<feature type="chain" id="PRO_1000120244" description="GMP synthase [glutamine-hydrolyzing]">
    <location>
        <begin position="1"/>
        <end position="527"/>
    </location>
</feature>
<feature type="domain" description="Glutamine amidotransferase type-1" evidence="1">
    <location>
        <begin position="4"/>
        <end position="202"/>
    </location>
</feature>
<feature type="domain" description="GMPS ATP-PPase" evidence="1">
    <location>
        <begin position="203"/>
        <end position="395"/>
    </location>
</feature>
<feature type="active site" description="Nucleophile" evidence="1">
    <location>
        <position position="81"/>
    </location>
</feature>
<feature type="active site" evidence="1">
    <location>
        <position position="176"/>
    </location>
</feature>
<feature type="active site" evidence="1">
    <location>
        <position position="178"/>
    </location>
</feature>
<feature type="binding site" evidence="1">
    <location>
        <begin position="230"/>
        <end position="236"/>
    </location>
    <ligand>
        <name>ATP</name>
        <dbReference type="ChEBI" id="CHEBI:30616"/>
    </ligand>
</feature>
<sequence>MHDKILILDFGSQVTQLIARRVREANVYSEIHPYDVDASFIRDFAPKGVILSGGPSSVTETDTPRVPQAVFELGVPVLGICYGMQAMAEQLGGKVDIGHLREFGYAEVRARNHTSLLEGISDFTTPEGHGMLKVWMSHGDKVLEMPPGFALMASTESCPIAAMADETRHFYGLQWHPEVTHTVQGRAMLERFVLKICGAQPDWEMGHYIDEAVAKIREQVGQEHVILGLSGGVDSSVAAALLHRAIGDQLTCVFVDHGLLRLNEAEQVMATFADHLGVKVIHVDASEVFLRKLAGVTDPEAKRKIIGAEFVEVFQTEAGKLTDAKWLAQGTIYPDVIESAGKGKKATQTIKSHHNVGGLPETLNLKLLEPLRELFKDEVRELGVKLGLPPAMVYRHPFPGPGLGVRILGEVKRDFADLLRRADAIFIETLRTFIDKETGKSWYDLTSQAFAVFLPVKSVGVMGDGRTYEYVVALRAVQTLDFMTAHWAHLPHELLGHVSNRIINEVRGINRVVYDISGKPPATIEWE</sequence>
<keyword id="KW-0067">ATP-binding</keyword>
<keyword id="KW-0315">Glutamine amidotransferase</keyword>
<keyword id="KW-0332">GMP biosynthesis</keyword>
<keyword id="KW-0436">Ligase</keyword>
<keyword id="KW-0547">Nucleotide-binding</keyword>
<keyword id="KW-0658">Purine biosynthesis</keyword>
<keyword id="KW-1185">Reference proteome</keyword>
<protein>
    <recommendedName>
        <fullName evidence="1">GMP synthase [glutamine-hydrolyzing]</fullName>
        <ecNumber evidence="1">6.3.5.2</ecNumber>
    </recommendedName>
    <alternativeName>
        <fullName evidence="1">GMP synthetase</fullName>
    </alternativeName>
    <alternativeName>
        <fullName evidence="1">Glutamine amidotransferase</fullName>
    </alternativeName>
</protein>
<gene>
    <name evidence="1" type="primary">guaA</name>
    <name type="ordered locus">Bxeno_A2709</name>
    <name type="ORF">Bxe_A1708</name>
</gene>
<name>GUAA_PARXL</name>